<comment type="function">
    <text evidence="1">This protein binds to 23S rRNA in the presence of protein L20.</text>
</comment>
<comment type="subunit">
    <text evidence="1">Part of the 50S ribosomal subunit. Contacts protein L20.</text>
</comment>
<comment type="similarity">
    <text evidence="1">Belongs to the bacterial ribosomal protein bL21 family.</text>
</comment>
<reference key="1">
    <citation type="submission" date="2009-06" db="EMBL/GenBank/DDBJ databases">
        <title>Complete sequence of Thermotogales bacterium TBF 19.5.1.</title>
        <authorList>
            <consortium name="US DOE Joint Genome Institute"/>
            <person name="Lucas S."/>
            <person name="Copeland A."/>
            <person name="Lapidus A."/>
            <person name="Glavina del Rio T."/>
            <person name="Tice H."/>
            <person name="Bruce D."/>
            <person name="Goodwin L."/>
            <person name="Pitluck S."/>
            <person name="Chertkov O."/>
            <person name="Brettin T."/>
            <person name="Detter J.C."/>
            <person name="Han C."/>
            <person name="Schmutz J."/>
            <person name="Larimer F."/>
            <person name="Land M."/>
            <person name="Hauser L."/>
            <person name="Kyrpides N."/>
            <person name="Ovchinnikova G."/>
            <person name="Noll K."/>
        </authorList>
    </citation>
    <scope>NUCLEOTIDE SEQUENCE [LARGE SCALE GENOMIC DNA]</scope>
    <source>
        <strain>ATCC BAA-1733 / DSM 21960 / TBF 19.5.1</strain>
    </source>
</reference>
<accession>C5CDH9</accession>
<gene>
    <name evidence="1" type="primary">rplU</name>
    <name type="ordered locus">Kole_0338</name>
</gene>
<dbReference type="EMBL" id="CP001634">
    <property type="protein sequence ID" value="ACR79063.1"/>
    <property type="molecule type" value="Genomic_DNA"/>
</dbReference>
<dbReference type="RefSeq" id="WP_012744850.1">
    <property type="nucleotide sequence ID" value="NC_012785.1"/>
</dbReference>
<dbReference type="SMR" id="C5CDH9"/>
<dbReference type="STRING" id="521045.Kole_0338"/>
<dbReference type="KEGG" id="kol:Kole_0338"/>
<dbReference type="eggNOG" id="COG0261">
    <property type="taxonomic scope" value="Bacteria"/>
</dbReference>
<dbReference type="HOGENOM" id="CLU_061463_3_3_0"/>
<dbReference type="OrthoDB" id="9813334at2"/>
<dbReference type="Proteomes" id="UP000002382">
    <property type="component" value="Chromosome"/>
</dbReference>
<dbReference type="GO" id="GO:0005737">
    <property type="term" value="C:cytoplasm"/>
    <property type="evidence" value="ECO:0007669"/>
    <property type="project" value="UniProtKB-ARBA"/>
</dbReference>
<dbReference type="GO" id="GO:1990904">
    <property type="term" value="C:ribonucleoprotein complex"/>
    <property type="evidence" value="ECO:0007669"/>
    <property type="project" value="UniProtKB-KW"/>
</dbReference>
<dbReference type="GO" id="GO:0005840">
    <property type="term" value="C:ribosome"/>
    <property type="evidence" value="ECO:0007669"/>
    <property type="project" value="UniProtKB-KW"/>
</dbReference>
<dbReference type="GO" id="GO:0019843">
    <property type="term" value="F:rRNA binding"/>
    <property type="evidence" value="ECO:0007669"/>
    <property type="project" value="UniProtKB-UniRule"/>
</dbReference>
<dbReference type="GO" id="GO:0003735">
    <property type="term" value="F:structural constituent of ribosome"/>
    <property type="evidence" value="ECO:0007669"/>
    <property type="project" value="InterPro"/>
</dbReference>
<dbReference type="GO" id="GO:0006412">
    <property type="term" value="P:translation"/>
    <property type="evidence" value="ECO:0007669"/>
    <property type="project" value="UniProtKB-UniRule"/>
</dbReference>
<dbReference type="HAMAP" id="MF_01363">
    <property type="entry name" value="Ribosomal_bL21"/>
    <property type="match status" value="1"/>
</dbReference>
<dbReference type="InterPro" id="IPR028909">
    <property type="entry name" value="bL21-like"/>
</dbReference>
<dbReference type="InterPro" id="IPR036164">
    <property type="entry name" value="bL21-like_sf"/>
</dbReference>
<dbReference type="InterPro" id="IPR001787">
    <property type="entry name" value="Ribosomal_bL21"/>
</dbReference>
<dbReference type="InterPro" id="IPR018258">
    <property type="entry name" value="Ribosomal_bL21_CS"/>
</dbReference>
<dbReference type="NCBIfam" id="TIGR00061">
    <property type="entry name" value="L21"/>
    <property type="match status" value="1"/>
</dbReference>
<dbReference type="PANTHER" id="PTHR21349">
    <property type="entry name" value="50S RIBOSOMAL PROTEIN L21"/>
    <property type="match status" value="1"/>
</dbReference>
<dbReference type="PANTHER" id="PTHR21349:SF0">
    <property type="entry name" value="LARGE RIBOSOMAL SUBUNIT PROTEIN BL21M"/>
    <property type="match status" value="1"/>
</dbReference>
<dbReference type="Pfam" id="PF00829">
    <property type="entry name" value="Ribosomal_L21p"/>
    <property type="match status" value="1"/>
</dbReference>
<dbReference type="SUPFAM" id="SSF141091">
    <property type="entry name" value="L21p-like"/>
    <property type="match status" value="1"/>
</dbReference>
<dbReference type="PROSITE" id="PS01169">
    <property type="entry name" value="RIBOSOMAL_L21"/>
    <property type="match status" value="1"/>
</dbReference>
<proteinExistence type="inferred from homology"/>
<organism>
    <name type="scientific">Kosmotoga olearia (strain ATCC BAA-1733 / DSM 21960 / TBF 19.5.1)</name>
    <dbReference type="NCBI Taxonomy" id="521045"/>
    <lineage>
        <taxon>Bacteria</taxon>
        <taxon>Thermotogati</taxon>
        <taxon>Thermotogota</taxon>
        <taxon>Thermotogae</taxon>
        <taxon>Kosmotogales</taxon>
        <taxon>Kosmotogaceae</taxon>
        <taxon>Kosmotoga</taxon>
    </lineage>
</organism>
<name>RL21_KOSOT</name>
<protein>
    <recommendedName>
        <fullName evidence="1">Large ribosomal subunit protein bL21</fullName>
    </recommendedName>
    <alternativeName>
        <fullName evidence="2">50S ribosomal protein L21</fullName>
    </alternativeName>
</protein>
<sequence length="104" mass="12149">MYAIIEASGKQYKVEEGITLFTEKLKDFAEGDQVVFDRVLLLKDDSGVKVGKPYLENVKIVGKVVRHGRGKKIRVVKFRPRKNYHRVKGHKQWFSEVLIEKIEY</sequence>
<feature type="chain" id="PRO_1000214895" description="Large ribosomal subunit protein bL21">
    <location>
        <begin position="1"/>
        <end position="104"/>
    </location>
</feature>
<keyword id="KW-1185">Reference proteome</keyword>
<keyword id="KW-0687">Ribonucleoprotein</keyword>
<keyword id="KW-0689">Ribosomal protein</keyword>
<keyword id="KW-0694">RNA-binding</keyword>
<keyword id="KW-0699">rRNA-binding</keyword>
<evidence type="ECO:0000255" key="1">
    <source>
        <dbReference type="HAMAP-Rule" id="MF_01363"/>
    </source>
</evidence>
<evidence type="ECO:0000305" key="2"/>